<sequence>MAVTFYDLSSEAGLEKLDEYLLSRSYISGYQASKDDLAVHAALAKPPSSKYVNVSRWYNHVEALLRISGVSAEGCGVTVEGSSVATPPVADTKASAAEDDDDDDVDLFGEETEEEKKASEERAAAVKASGKKKESGKSSVLLDVKPWDDETDMTKLEEAVRSIKMDGLLWGASKLVAVGYGIKKLQIMLTIVDDLVSVDDLVEDYLTAEPANEYIQSCDIVAFNKI</sequence>
<feature type="initiator methionine" description="Removed">
    <location>
        <position position="1"/>
    </location>
</feature>
<feature type="chain" id="PRO_0000155039" description="Elongation factor 1-delta">
    <location>
        <begin position="2"/>
        <end position="226"/>
    </location>
</feature>
<feature type="region of interest" description="Disordered" evidence="2">
    <location>
        <begin position="82"/>
        <end position="131"/>
    </location>
</feature>
<feature type="compositionally biased region" description="Acidic residues" evidence="2">
    <location>
        <begin position="97"/>
        <end position="113"/>
    </location>
</feature>
<feature type="compositionally biased region" description="Basic and acidic residues" evidence="2">
    <location>
        <begin position="114"/>
        <end position="124"/>
    </location>
</feature>
<dbReference type="EMBL" id="U87222">
    <property type="protein sequence ID" value="AAB68395.1"/>
    <property type="molecule type" value="mRNA"/>
</dbReference>
<dbReference type="SMR" id="P93447"/>
<dbReference type="GO" id="GO:0005829">
    <property type="term" value="C:cytosol"/>
    <property type="evidence" value="ECO:0007669"/>
    <property type="project" value="TreeGrafter"/>
</dbReference>
<dbReference type="GO" id="GO:0005853">
    <property type="term" value="C:eukaryotic translation elongation factor 1 complex"/>
    <property type="evidence" value="ECO:0007669"/>
    <property type="project" value="InterPro"/>
</dbReference>
<dbReference type="GO" id="GO:0005085">
    <property type="term" value="F:guanyl-nucleotide exchange factor activity"/>
    <property type="evidence" value="ECO:0007669"/>
    <property type="project" value="TreeGrafter"/>
</dbReference>
<dbReference type="GO" id="GO:0003746">
    <property type="term" value="F:translation elongation factor activity"/>
    <property type="evidence" value="ECO:0007669"/>
    <property type="project" value="UniProtKB-KW"/>
</dbReference>
<dbReference type="CDD" id="cd00292">
    <property type="entry name" value="EF1B"/>
    <property type="match status" value="1"/>
</dbReference>
<dbReference type="FunFam" id="3.30.70.60:FF:000001">
    <property type="entry name" value="Elongation factor 1-beta 1 like"/>
    <property type="match status" value="1"/>
</dbReference>
<dbReference type="FunFam" id="1.20.1050.130:FF:000006">
    <property type="entry name" value="Elongation factor 1-delta 1"/>
    <property type="match status" value="1"/>
</dbReference>
<dbReference type="Gene3D" id="1.20.1050.130">
    <property type="match status" value="1"/>
</dbReference>
<dbReference type="Gene3D" id="3.30.70.60">
    <property type="match status" value="1"/>
</dbReference>
<dbReference type="InterPro" id="IPR036219">
    <property type="entry name" value="eEF-1beta-like_sf"/>
</dbReference>
<dbReference type="InterPro" id="IPR049720">
    <property type="entry name" value="EF1B_bsu/dsu"/>
</dbReference>
<dbReference type="InterPro" id="IPR014038">
    <property type="entry name" value="EF1B_bsu/dsu_GNE"/>
</dbReference>
<dbReference type="InterPro" id="IPR036282">
    <property type="entry name" value="Glutathione-S-Trfase_C_sf"/>
</dbReference>
<dbReference type="InterPro" id="IPR014717">
    <property type="entry name" value="Transl_elong_EF1B/ribsomal_bS6"/>
</dbReference>
<dbReference type="InterPro" id="IPR001326">
    <property type="entry name" value="Transl_elong_EF1B_B/D_CS"/>
</dbReference>
<dbReference type="PANTHER" id="PTHR11595">
    <property type="entry name" value="EF-HAND AND COILED-COIL DOMAIN-CONTAINING FAMILY MEMBER"/>
    <property type="match status" value="1"/>
</dbReference>
<dbReference type="PANTHER" id="PTHR11595:SF21">
    <property type="entry name" value="ELONGATION FACTOR 1-BETA"/>
    <property type="match status" value="1"/>
</dbReference>
<dbReference type="Pfam" id="PF00736">
    <property type="entry name" value="EF1_GNE"/>
    <property type="match status" value="1"/>
</dbReference>
<dbReference type="SMART" id="SM00888">
    <property type="entry name" value="EF1_GNE"/>
    <property type="match status" value="1"/>
</dbReference>
<dbReference type="SUPFAM" id="SSF54984">
    <property type="entry name" value="eEF-1beta-like"/>
    <property type="match status" value="1"/>
</dbReference>
<dbReference type="SUPFAM" id="SSF47616">
    <property type="entry name" value="GST C-terminal domain-like"/>
    <property type="match status" value="1"/>
</dbReference>
<dbReference type="PROSITE" id="PS00824">
    <property type="entry name" value="EF1BD_1"/>
    <property type="match status" value="1"/>
</dbReference>
<dbReference type="PROSITE" id="PS00825">
    <property type="entry name" value="EF1BD_2"/>
    <property type="match status" value="1"/>
</dbReference>
<comment type="function">
    <text>EF-1-beta and EF-1-beta' stimulate the exchange of GDP bound to EF-1-alpha to GTP.</text>
</comment>
<comment type="subunit">
    <text evidence="1">EF-1 is composed of 4 subunits: alpha, beta (1B-alpha=beta'), delta (1B-beta), and gamma (1B-gamma).</text>
</comment>
<comment type="similarity">
    <text evidence="3">Belongs to the EF-1-beta/EF-1-delta family.</text>
</comment>
<evidence type="ECO:0000250" key="1"/>
<evidence type="ECO:0000256" key="2">
    <source>
        <dbReference type="SAM" id="MobiDB-lite"/>
    </source>
</evidence>
<evidence type="ECO:0000305" key="3"/>
<reference key="1">
    <citation type="online journal article" date="1997" name="Plant Gene Register">
        <title>Nucleotide sequence of a cDNA clone for an elongation factor-1beta from Pimpinella brachycarpa shoot-tip.</title>
        <authorList>
            <person name="Moon Y.-H."/>
            <person name="Shin J.-S."/>
            <person name="Lim S.-H."/>
            <person name="Kim J.-C."/>
            <person name="Han T.-J."/>
            <person name="Cho S.H."/>
            <person name="Lee K.-W."/>
        </authorList>
        <locator>PGR97-057</locator>
    </citation>
    <scope>NUCLEOTIDE SEQUENCE [MRNA]</scope>
    <source>
        <tissue>Shoot apex</tissue>
    </source>
</reference>
<organism>
    <name type="scientific">Spuriopimpinella brachycarpa</name>
    <name type="common">Chamnamul</name>
    <name type="synonym">Pimpinella brachycarpa</name>
    <dbReference type="NCBI Taxonomy" id="45043"/>
    <lineage>
        <taxon>Eukaryota</taxon>
        <taxon>Viridiplantae</taxon>
        <taxon>Streptophyta</taxon>
        <taxon>Embryophyta</taxon>
        <taxon>Tracheophyta</taxon>
        <taxon>Spermatophyta</taxon>
        <taxon>Magnoliopsida</taxon>
        <taxon>eudicotyledons</taxon>
        <taxon>Gunneridae</taxon>
        <taxon>Pentapetalae</taxon>
        <taxon>asterids</taxon>
        <taxon>campanulids</taxon>
        <taxon>Apiales</taxon>
        <taxon>Apiaceae</taxon>
        <taxon>Apioideae</taxon>
        <taxon>Acronema clade</taxon>
        <taxon>Spuriopimpinella</taxon>
    </lineage>
</organism>
<name>EF1D_SPUBR</name>
<accession>P93447</accession>
<proteinExistence type="evidence at transcript level"/>
<protein>
    <recommendedName>
        <fullName>Elongation factor 1-delta</fullName>
        <shortName>EF-1-delta</shortName>
    </recommendedName>
    <alternativeName>
        <fullName>Elongation factor 1B-beta</fullName>
    </alternativeName>
    <alternativeName>
        <fullName>eEF-1B beta</fullName>
    </alternativeName>
</protein>
<keyword id="KW-0251">Elongation factor</keyword>
<keyword id="KW-0648">Protein biosynthesis</keyword>